<accession>K4PW38</accession>
<accession>Q0ISX6</accession>
<accession>Q2R581</accession>
<accession>Q53KT8</accession>
<proteinExistence type="evidence at protein level"/>
<feature type="chain" id="PRO_0000440333" description="Protein RICE SALT SENSITIVE 3">
    <location>
        <begin position="1"/>
        <end position="458"/>
    </location>
</feature>
<feature type="region of interest" description="Disordered" evidence="1">
    <location>
        <begin position="1"/>
        <end position="21"/>
    </location>
</feature>
<feature type="region of interest" description="Disordered" evidence="1">
    <location>
        <begin position="220"/>
        <end position="325"/>
    </location>
</feature>
<feature type="region of interest" description="Disordered" evidence="1">
    <location>
        <begin position="354"/>
        <end position="374"/>
    </location>
</feature>
<feature type="region of interest" description="Disordered" evidence="1">
    <location>
        <begin position="386"/>
        <end position="458"/>
    </location>
</feature>
<feature type="compositionally biased region" description="Gly residues" evidence="1">
    <location>
        <begin position="1"/>
        <end position="17"/>
    </location>
</feature>
<feature type="compositionally biased region" description="Low complexity" evidence="1">
    <location>
        <begin position="220"/>
        <end position="232"/>
    </location>
</feature>
<feature type="compositionally biased region" description="Pro residues" evidence="1">
    <location>
        <begin position="245"/>
        <end position="262"/>
    </location>
</feature>
<feature type="compositionally biased region" description="Low complexity" evidence="1">
    <location>
        <begin position="308"/>
        <end position="317"/>
    </location>
</feature>
<feature type="compositionally biased region" description="Low complexity" evidence="1">
    <location>
        <begin position="413"/>
        <end position="436"/>
    </location>
</feature>
<comment type="function">
    <text evidence="2">Involved in the repression of jasmonate (JA)-induced genes. Forms a ternary complex with TIFY11A/JAZ9 and BHLH094 to negatively regulate JA-responsive genes. Involved in transcriptional regulation in the root tip. Plays a regulatory role in root cell elongation. Regulates root cell elongation during salt stress.</text>
</comment>
<comment type="subunit">
    <text evidence="2">Interacts with BHLH094, BHLH089, TIFY11A/JAZ9 and TIFY11C/JAZ11. Forms a ternary complex with TIFY11A/JAZ9 and BHLH094 in the nucleus.</text>
</comment>
<comment type="subcellular location">
    <subcellularLocation>
        <location evidence="2">Nucleus</location>
    </subcellularLocation>
    <subcellularLocation>
        <location evidence="2">Cytoplasm</location>
    </subcellularLocation>
</comment>
<comment type="tissue specificity">
    <text evidence="2">Expressed in root tips. Expressed at high levels in the meristematic zone and at low levels in the elongation zone of the root tip.</text>
</comment>
<comment type="disruption phenotype">
    <text evidence="2">Defects in root growth.</text>
</comment>
<comment type="sequence caution" evidence="4">
    <conflict type="erroneous gene model prediction">
        <sequence resource="EMBL-CDS" id="AAX96247"/>
    </conflict>
</comment>
<comment type="sequence caution" evidence="4">
    <conflict type="erroneous gene model prediction">
        <sequence resource="EMBL-CDS" id="ABA93307"/>
    </conflict>
</comment>
<comment type="sequence caution" evidence="4">
    <conflict type="erroneous gene model prediction">
        <sequence resource="EMBL-CDS" id="BAF28189"/>
    </conflict>
</comment>
<dbReference type="EMBL" id="AB753860">
    <property type="protein sequence ID" value="BAM62866.1"/>
    <property type="molecule type" value="mRNA"/>
</dbReference>
<dbReference type="EMBL" id="AC145808">
    <property type="protein sequence ID" value="AAX96247.1"/>
    <property type="status" value="ALT_SEQ"/>
    <property type="molecule type" value="Genomic_DNA"/>
</dbReference>
<dbReference type="EMBL" id="DP000010">
    <property type="protein sequence ID" value="ABA93307.2"/>
    <property type="status" value="ALT_SEQ"/>
    <property type="molecule type" value="Genomic_DNA"/>
</dbReference>
<dbReference type="EMBL" id="AP008217">
    <property type="protein sequence ID" value="BAF28189.2"/>
    <property type="status" value="ALT_SEQ"/>
    <property type="molecule type" value="Genomic_DNA"/>
</dbReference>
<dbReference type="EMBL" id="AP014967">
    <property type="protein sequence ID" value="BAT13885.1"/>
    <property type="molecule type" value="Genomic_DNA"/>
</dbReference>
<dbReference type="RefSeq" id="XP_015615297.1">
    <property type="nucleotide sequence ID" value="XM_015759811.1"/>
</dbReference>
<dbReference type="FunCoup" id="K4PW38">
    <property type="interactions" value="1542"/>
</dbReference>
<dbReference type="STRING" id="39947.K4PW38"/>
<dbReference type="PaxDb" id="39947-K4PW38"/>
<dbReference type="EnsemblPlants" id="Os11t0446000-02">
    <property type="protein sequence ID" value="Os11t0446000-02"/>
    <property type="gene ID" value="Os11g0446000"/>
</dbReference>
<dbReference type="Gramene" id="Os11t0446000-02">
    <property type="protein sequence ID" value="Os11t0446000-02"/>
    <property type="gene ID" value="Os11g0446000"/>
</dbReference>
<dbReference type="KEGG" id="dosa:Os11g0446000"/>
<dbReference type="eggNOG" id="ENOG502QQDZ">
    <property type="taxonomic scope" value="Eukaryota"/>
</dbReference>
<dbReference type="HOGENOM" id="CLU_055923_2_0_1"/>
<dbReference type="InParanoid" id="K4PW38"/>
<dbReference type="OrthoDB" id="1922567at2759"/>
<dbReference type="Proteomes" id="UP000000763">
    <property type="component" value="Chromosome 11"/>
</dbReference>
<dbReference type="Proteomes" id="UP000059680">
    <property type="component" value="Chromosome 11"/>
</dbReference>
<dbReference type="ExpressionAtlas" id="K4PW38">
    <property type="expression patterns" value="baseline and differential"/>
</dbReference>
<dbReference type="GO" id="GO:0005737">
    <property type="term" value="C:cytoplasm"/>
    <property type="evidence" value="ECO:0007669"/>
    <property type="project" value="UniProtKB-SubCell"/>
</dbReference>
<dbReference type="GO" id="GO:0005634">
    <property type="term" value="C:nucleus"/>
    <property type="evidence" value="ECO:0007669"/>
    <property type="project" value="UniProtKB-SubCell"/>
</dbReference>
<dbReference type="InterPro" id="IPR025610">
    <property type="entry name" value="MYC/MYB_N"/>
</dbReference>
<dbReference type="InterPro" id="IPR044170">
    <property type="entry name" value="RSS3-like"/>
</dbReference>
<dbReference type="PANTHER" id="PTHR47375">
    <property type="entry name" value="GB|AAF34833.1"/>
    <property type="match status" value="1"/>
</dbReference>
<dbReference type="PANTHER" id="PTHR47375:SF1">
    <property type="entry name" value="GB|AAF34833.1"/>
    <property type="match status" value="1"/>
</dbReference>
<dbReference type="Pfam" id="PF14215">
    <property type="entry name" value="bHLH-MYC_N"/>
    <property type="match status" value="2"/>
</dbReference>
<sequence length="458" mass="49187">MVGSGAAGGGGGGGGGGDHARSKEAAGMMALHEALRNVCLNSDWTYSVFWTIRPRPRCRGGNGCKVGDDNGSLMLMWEDGFCRPRVAECLEDIDGEDPVRKAFSKMSIQLYNYGEGLMGKVASDKCHKWVFKEPSECEPNIANYWQSSFDALPPEWTDQFASGIQTIAVIQAGHGLLQLGSCKIIPEDLHFVLRMRHMFESLGYQSGFFLSQLFSSSRGTSPSPSSFPLKQQQPPPPQLFNWPGHAPPQLPPGASPLFPPGPAAFHPSSRPMPPFPGGGKDESHLFHLPPAAAAKQPQHMDEHHHHQQQPMAAPQQHGGEAPEGDLKWPNGLSFFTALTGRTEDAKFLFGGGGGGGADDGSKTAAAAQDAGHGGAENVEEYLSLESHSNKARRMESAQSTKFKRSFTLPARMSSSTTSTSPSVSASTAPAPPQQQQGMEYRGPHEGGVYSDLMETFLE</sequence>
<keyword id="KW-0963">Cytoplasm</keyword>
<keyword id="KW-0539">Nucleus</keyword>
<keyword id="KW-1185">Reference proteome</keyword>
<keyword id="KW-0346">Stress response</keyword>
<keyword id="KW-0804">Transcription</keyword>
<keyword id="KW-0805">Transcription regulation</keyword>
<evidence type="ECO:0000256" key="1">
    <source>
        <dbReference type="SAM" id="MobiDB-lite"/>
    </source>
</evidence>
<evidence type="ECO:0000269" key="2">
    <source>
    </source>
</evidence>
<evidence type="ECO:0000303" key="3">
    <source>
    </source>
</evidence>
<evidence type="ECO:0000305" key="4"/>
<evidence type="ECO:0000312" key="5">
    <source>
        <dbReference type="EMBL" id="ABA93307.2"/>
    </source>
</evidence>
<evidence type="ECO:0000312" key="6">
    <source>
        <dbReference type="EMBL" id="BAT13885.1"/>
    </source>
</evidence>
<organism>
    <name type="scientific">Oryza sativa subsp. japonica</name>
    <name type="common">Rice</name>
    <dbReference type="NCBI Taxonomy" id="39947"/>
    <lineage>
        <taxon>Eukaryota</taxon>
        <taxon>Viridiplantae</taxon>
        <taxon>Streptophyta</taxon>
        <taxon>Embryophyta</taxon>
        <taxon>Tracheophyta</taxon>
        <taxon>Spermatophyta</taxon>
        <taxon>Magnoliopsida</taxon>
        <taxon>Liliopsida</taxon>
        <taxon>Poales</taxon>
        <taxon>Poaceae</taxon>
        <taxon>BOP clade</taxon>
        <taxon>Oryzoideae</taxon>
        <taxon>Oryzeae</taxon>
        <taxon>Oryzinae</taxon>
        <taxon>Oryza</taxon>
        <taxon>Oryza sativa</taxon>
    </lineage>
</organism>
<reference key="1">
    <citation type="journal article" date="2013" name="Plant Cell">
        <title>RICE SALT SENSITIVE3 forms a ternary complex with JAZ and class-C bHLH factors and regulates jasmonate-induced gene expression and root cell elongation.</title>
        <authorList>
            <person name="Toda Y."/>
            <person name="Tanaka M."/>
            <person name="Ogawa D."/>
            <person name="Kurata K."/>
            <person name="Kurotani K."/>
            <person name="Habu Y."/>
            <person name="Ando T."/>
            <person name="Sugimoto K."/>
            <person name="Mitsuda N."/>
            <person name="Katoh E."/>
            <person name="Abe K."/>
            <person name="Miyao A."/>
            <person name="Hirochika H."/>
            <person name="Hattori T."/>
            <person name="Takeda S."/>
        </authorList>
    </citation>
    <scope>NUCLEOTIDE SEQUENCE [MRNA]</scope>
    <scope>FUNCTION</scope>
    <scope>INTERACTION WITH BHLH094; BHLH089; TIFY11A/JAZ9 AND TIFY11C/JAZ11</scope>
    <scope>SUBUNIT</scope>
    <scope>SUBCELLULAR LOCATION</scope>
    <scope>TISSUE SPECIFICITY</scope>
    <scope>DISRUPTION PHENOTYPE</scope>
    <source>
        <strain>cv. Nipponbare</strain>
    </source>
</reference>
<reference key="2">
    <citation type="journal article" date="2005" name="BMC Biol.">
        <title>The sequence of rice chromosomes 11 and 12, rich in disease resistance genes and recent gene duplications.</title>
        <authorList>
            <consortium name="The rice chromosomes 11 and 12 sequencing consortia"/>
        </authorList>
    </citation>
    <scope>NUCLEOTIDE SEQUENCE [LARGE SCALE GENOMIC DNA]</scope>
    <source>
        <strain>cv. Nipponbare</strain>
    </source>
</reference>
<reference key="3">
    <citation type="journal article" date="2005" name="Nature">
        <title>The map-based sequence of the rice genome.</title>
        <authorList>
            <consortium name="International rice genome sequencing project (IRGSP)"/>
        </authorList>
    </citation>
    <scope>NUCLEOTIDE SEQUENCE [LARGE SCALE GENOMIC DNA]</scope>
    <source>
        <strain>cv. Nipponbare</strain>
    </source>
</reference>
<reference key="4">
    <citation type="journal article" date="2008" name="Nucleic Acids Res.">
        <title>The rice annotation project database (RAP-DB): 2008 update.</title>
        <authorList>
            <consortium name="The rice annotation project (RAP)"/>
        </authorList>
    </citation>
    <scope>GENOME REANNOTATION</scope>
    <source>
        <strain>cv. Nipponbare</strain>
    </source>
</reference>
<reference key="5">
    <citation type="journal article" date="2013" name="Rice">
        <title>Improvement of the Oryza sativa Nipponbare reference genome using next generation sequence and optical map data.</title>
        <authorList>
            <person name="Kawahara Y."/>
            <person name="de la Bastide M."/>
            <person name="Hamilton J.P."/>
            <person name="Kanamori H."/>
            <person name="McCombie W.R."/>
            <person name="Ouyang S."/>
            <person name="Schwartz D.C."/>
            <person name="Tanaka T."/>
            <person name="Wu J."/>
            <person name="Zhou S."/>
            <person name="Childs K.L."/>
            <person name="Davidson R.M."/>
            <person name="Lin H."/>
            <person name="Quesada-Ocampo L."/>
            <person name="Vaillancourt B."/>
            <person name="Sakai H."/>
            <person name="Lee S.S."/>
            <person name="Kim J."/>
            <person name="Numa H."/>
            <person name="Itoh T."/>
            <person name="Buell C.R."/>
            <person name="Matsumoto T."/>
        </authorList>
    </citation>
    <scope>GENOME REANNOTATION</scope>
    <source>
        <strain>cv. Nipponbare</strain>
    </source>
</reference>
<name>RSS3_ORYSJ</name>
<gene>
    <name evidence="3" type="primary">RSS3</name>
    <name evidence="6" type="ordered locus">Os11g0446000</name>
    <name evidence="5" type="ordered locus">LOC_Os11g25920</name>
</gene>
<protein>
    <recommendedName>
        <fullName evidence="3">Protein RICE SALT SENSITIVE 3</fullName>
    </recommendedName>
</protein>